<reference key="1">
    <citation type="journal article" date="2001" name="DNA Res.">
        <title>Complete genomic sequence of the filamentous nitrogen-fixing cyanobacterium Anabaena sp. strain PCC 7120.</title>
        <authorList>
            <person name="Kaneko T."/>
            <person name="Nakamura Y."/>
            <person name="Wolk C.P."/>
            <person name="Kuritz T."/>
            <person name="Sasamoto S."/>
            <person name="Watanabe A."/>
            <person name="Iriguchi M."/>
            <person name="Ishikawa A."/>
            <person name="Kawashima K."/>
            <person name="Kimura T."/>
            <person name="Kishida Y."/>
            <person name="Kohara M."/>
            <person name="Matsumoto M."/>
            <person name="Matsuno A."/>
            <person name="Muraki A."/>
            <person name="Nakazaki N."/>
            <person name="Shimpo S."/>
            <person name="Sugimoto M."/>
            <person name="Takazawa M."/>
            <person name="Yamada M."/>
            <person name="Yasuda M."/>
            <person name="Tabata S."/>
        </authorList>
    </citation>
    <scope>NUCLEOTIDE SEQUENCE [LARGE SCALE GENOMIC DNA]</scope>
    <source>
        <strain>PCC 7120 / SAG 25.82 / UTEX 2576</strain>
    </source>
</reference>
<dbReference type="EC" id="2.3.2.6" evidence="1"/>
<dbReference type="EMBL" id="BA000019">
    <property type="protein sequence ID" value="BAB75666.1"/>
    <property type="molecule type" value="Genomic_DNA"/>
</dbReference>
<dbReference type="PIR" id="AH2301">
    <property type="entry name" value="AH2301"/>
</dbReference>
<dbReference type="RefSeq" id="WP_010998108.1">
    <property type="nucleotide sequence ID" value="NZ_RSCN01000045.1"/>
</dbReference>
<dbReference type="SMR" id="Q8YQ68"/>
<dbReference type="STRING" id="103690.gene:10496009"/>
<dbReference type="KEGG" id="ana:all3967"/>
<dbReference type="eggNOG" id="COG2360">
    <property type="taxonomic scope" value="Bacteria"/>
</dbReference>
<dbReference type="OrthoDB" id="9790282at2"/>
<dbReference type="Proteomes" id="UP000002483">
    <property type="component" value="Chromosome"/>
</dbReference>
<dbReference type="GO" id="GO:0005737">
    <property type="term" value="C:cytoplasm"/>
    <property type="evidence" value="ECO:0007669"/>
    <property type="project" value="UniProtKB-SubCell"/>
</dbReference>
<dbReference type="GO" id="GO:0008914">
    <property type="term" value="F:leucyl-tRNA--protein transferase activity"/>
    <property type="evidence" value="ECO:0007669"/>
    <property type="project" value="UniProtKB-UniRule"/>
</dbReference>
<dbReference type="GO" id="GO:0030163">
    <property type="term" value="P:protein catabolic process"/>
    <property type="evidence" value="ECO:0007669"/>
    <property type="project" value="UniProtKB-UniRule"/>
</dbReference>
<dbReference type="Gene3D" id="3.40.630.70">
    <property type="entry name" value="Leucyl/phenylalanyl-tRNA-protein transferase, C-terminal domain"/>
    <property type="match status" value="1"/>
</dbReference>
<dbReference type="HAMAP" id="MF_00688">
    <property type="entry name" value="Leu_Phe_trans"/>
    <property type="match status" value="1"/>
</dbReference>
<dbReference type="InterPro" id="IPR016181">
    <property type="entry name" value="Acyl_CoA_acyltransferase"/>
</dbReference>
<dbReference type="InterPro" id="IPR004616">
    <property type="entry name" value="Leu/Phe-tRNA_Trfase"/>
</dbReference>
<dbReference type="InterPro" id="IPR042203">
    <property type="entry name" value="Leu/Phe-tRNA_Trfase_C"/>
</dbReference>
<dbReference type="NCBIfam" id="TIGR00667">
    <property type="entry name" value="aat"/>
    <property type="match status" value="1"/>
</dbReference>
<dbReference type="PANTHER" id="PTHR30098">
    <property type="entry name" value="LEUCYL/PHENYLALANYL-TRNA--PROTEIN TRANSFERASE"/>
    <property type="match status" value="1"/>
</dbReference>
<dbReference type="PANTHER" id="PTHR30098:SF2">
    <property type="entry name" value="LEUCYL_PHENYLALANYL-TRNA--PROTEIN TRANSFERASE"/>
    <property type="match status" value="1"/>
</dbReference>
<dbReference type="Pfam" id="PF03588">
    <property type="entry name" value="Leu_Phe_trans"/>
    <property type="match status" value="1"/>
</dbReference>
<dbReference type="SUPFAM" id="SSF55729">
    <property type="entry name" value="Acyl-CoA N-acyltransferases (Nat)"/>
    <property type="match status" value="1"/>
</dbReference>
<proteinExistence type="inferred from homology"/>
<comment type="function">
    <text evidence="1">Functions in the N-end rule pathway of protein degradation where it conjugates Leu, Phe and, less efficiently, Met from aminoacyl-tRNAs to the N-termini of proteins containing an N-terminal arginine or lysine.</text>
</comment>
<comment type="catalytic activity">
    <reaction evidence="1">
        <text>N-terminal L-lysyl-[protein] + L-leucyl-tRNA(Leu) = N-terminal L-leucyl-L-lysyl-[protein] + tRNA(Leu) + H(+)</text>
        <dbReference type="Rhea" id="RHEA:12340"/>
        <dbReference type="Rhea" id="RHEA-COMP:9613"/>
        <dbReference type="Rhea" id="RHEA-COMP:9622"/>
        <dbReference type="Rhea" id="RHEA-COMP:12670"/>
        <dbReference type="Rhea" id="RHEA-COMP:12671"/>
        <dbReference type="ChEBI" id="CHEBI:15378"/>
        <dbReference type="ChEBI" id="CHEBI:65249"/>
        <dbReference type="ChEBI" id="CHEBI:78442"/>
        <dbReference type="ChEBI" id="CHEBI:78494"/>
        <dbReference type="ChEBI" id="CHEBI:133043"/>
        <dbReference type="EC" id="2.3.2.6"/>
    </reaction>
</comment>
<comment type="catalytic activity">
    <reaction evidence="1">
        <text>N-terminal L-arginyl-[protein] + L-leucyl-tRNA(Leu) = N-terminal L-leucyl-L-arginyl-[protein] + tRNA(Leu) + H(+)</text>
        <dbReference type="Rhea" id="RHEA:50416"/>
        <dbReference type="Rhea" id="RHEA-COMP:9613"/>
        <dbReference type="Rhea" id="RHEA-COMP:9622"/>
        <dbReference type="Rhea" id="RHEA-COMP:12672"/>
        <dbReference type="Rhea" id="RHEA-COMP:12673"/>
        <dbReference type="ChEBI" id="CHEBI:15378"/>
        <dbReference type="ChEBI" id="CHEBI:64719"/>
        <dbReference type="ChEBI" id="CHEBI:78442"/>
        <dbReference type="ChEBI" id="CHEBI:78494"/>
        <dbReference type="ChEBI" id="CHEBI:133044"/>
        <dbReference type="EC" id="2.3.2.6"/>
    </reaction>
</comment>
<comment type="catalytic activity">
    <reaction evidence="1">
        <text>L-phenylalanyl-tRNA(Phe) + an N-terminal L-alpha-aminoacyl-[protein] = an N-terminal L-phenylalanyl-L-alpha-aminoacyl-[protein] + tRNA(Phe)</text>
        <dbReference type="Rhea" id="RHEA:43632"/>
        <dbReference type="Rhea" id="RHEA-COMP:9668"/>
        <dbReference type="Rhea" id="RHEA-COMP:9699"/>
        <dbReference type="Rhea" id="RHEA-COMP:10636"/>
        <dbReference type="Rhea" id="RHEA-COMP:10637"/>
        <dbReference type="ChEBI" id="CHEBI:78442"/>
        <dbReference type="ChEBI" id="CHEBI:78531"/>
        <dbReference type="ChEBI" id="CHEBI:78597"/>
        <dbReference type="ChEBI" id="CHEBI:83561"/>
        <dbReference type="EC" id="2.3.2.6"/>
    </reaction>
</comment>
<comment type="subcellular location">
    <subcellularLocation>
        <location evidence="1">Cytoplasm</location>
    </subcellularLocation>
</comment>
<comment type="similarity">
    <text evidence="1">Belongs to the L/F-transferase family.</text>
</comment>
<sequence>MQYDIASIIQGYAQGYFLMADDNDCLGWYGSRDRTLIPLDERFRYPKSLQRVLNQERFTVAINRDFAAVVAGCANRESTWISQELQEIYRLLYQTGYAYSFETWQGEELAGGILGIVIGGAFIGESMFYRIPEGSKVAMVKLVERLRQREFVMFDAQMMNPHLERFGAYRIKDKEYKTLLEKALLSPSTLI</sequence>
<feature type="chain" id="PRO_0000207204" description="Leucyl/phenylalanyl-tRNA--protein transferase">
    <location>
        <begin position="1"/>
        <end position="191"/>
    </location>
</feature>
<gene>
    <name evidence="1" type="primary">aat</name>
    <name type="ordered locus">all3967</name>
</gene>
<organism>
    <name type="scientific">Nostoc sp. (strain PCC 7120 / SAG 25.82 / UTEX 2576)</name>
    <dbReference type="NCBI Taxonomy" id="103690"/>
    <lineage>
        <taxon>Bacteria</taxon>
        <taxon>Bacillati</taxon>
        <taxon>Cyanobacteriota</taxon>
        <taxon>Cyanophyceae</taxon>
        <taxon>Nostocales</taxon>
        <taxon>Nostocaceae</taxon>
        <taxon>Nostoc</taxon>
    </lineage>
</organism>
<accession>Q8YQ68</accession>
<keyword id="KW-0012">Acyltransferase</keyword>
<keyword id="KW-0963">Cytoplasm</keyword>
<keyword id="KW-1185">Reference proteome</keyword>
<keyword id="KW-0808">Transferase</keyword>
<protein>
    <recommendedName>
        <fullName evidence="1">Leucyl/phenylalanyl-tRNA--protein transferase</fullName>
        <ecNumber evidence="1">2.3.2.6</ecNumber>
    </recommendedName>
    <alternativeName>
        <fullName evidence="1">L/F-transferase</fullName>
    </alternativeName>
    <alternativeName>
        <fullName evidence="1">Leucyltransferase</fullName>
    </alternativeName>
    <alternativeName>
        <fullName evidence="1">Phenyalanyltransferase</fullName>
    </alternativeName>
</protein>
<evidence type="ECO:0000255" key="1">
    <source>
        <dbReference type="HAMAP-Rule" id="MF_00688"/>
    </source>
</evidence>
<name>LFTR_NOSS1</name>